<reference key="1">
    <citation type="journal article" date="2009" name="BMC Genomics">
        <title>Metabolic analysis of the soil microbe Dechloromonas aromatica str. RCB: indications of a surprisingly complex life-style and cryptic anaerobic pathways for aromatic degradation.</title>
        <authorList>
            <person name="Salinero K.K."/>
            <person name="Keller K."/>
            <person name="Feil W.S."/>
            <person name="Feil H."/>
            <person name="Trong S."/>
            <person name="Di Bartolo G."/>
            <person name="Lapidus A."/>
        </authorList>
    </citation>
    <scope>NUCLEOTIDE SEQUENCE [LARGE SCALE GENOMIC DNA]</scope>
    <source>
        <strain>RCB</strain>
    </source>
</reference>
<gene>
    <name evidence="1" type="primary">fmt</name>
    <name type="ordered locus">Daro_0022</name>
</gene>
<feature type="chain" id="PRO_1000020053" description="Methionyl-tRNA formyltransferase">
    <location>
        <begin position="1"/>
        <end position="307"/>
    </location>
</feature>
<feature type="binding site" evidence="1">
    <location>
        <begin position="109"/>
        <end position="112"/>
    </location>
    <ligand>
        <name>(6S)-5,6,7,8-tetrahydrofolate</name>
        <dbReference type="ChEBI" id="CHEBI:57453"/>
    </ligand>
</feature>
<protein>
    <recommendedName>
        <fullName evidence="1">Methionyl-tRNA formyltransferase</fullName>
        <ecNumber evidence="1">2.1.2.9</ecNumber>
    </recommendedName>
</protein>
<keyword id="KW-0648">Protein biosynthesis</keyword>
<keyword id="KW-0808">Transferase</keyword>
<dbReference type="EC" id="2.1.2.9" evidence="1"/>
<dbReference type="EMBL" id="CP000089">
    <property type="protein sequence ID" value="AAZ44781.1"/>
    <property type="molecule type" value="Genomic_DNA"/>
</dbReference>
<dbReference type="SMR" id="Q47K50"/>
<dbReference type="STRING" id="159087.Daro_0022"/>
<dbReference type="KEGG" id="dar:Daro_0022"/>
<dbReference type="eggNOG" id="COG0223">
    <property type="taxonomic scope" value="Bacteria"/>
</dbReference>
<dbReference type="HOGENOM" id="CLU_033347_1_2_4"/>
<dbReference type="OrthoDB" id="9802815at2"/>
<dbReference type="GO" id="GO:0005829">
    <property type="term" value="C:cytosol"/>
    <property type="evidence" value="ECO:0007669"/>
    <property type="project" value="TreeGrafter"/>
</dbReference>
<dbReference type="GO" id="GO:0004479">
    <property type="term" value="F:methionyl-tRNA formyltransferase activity"/>
    <property type="evidence" value="ECO:0007669"/>
    <property type="project" value="UniProtKB-UniRule"/>
</dbReference>
<dbReference type="CDD" id="cd08646">
    <property type="entry name" value="FMT_core_Met-tRNA-FMT_N"/>
    <property type="match status" value="1"/>
</dbReference>
<dbReference type="CDD" id="cd08704">
    <property type="entry name" value="Met_tRNA_FMT_C"/>
    <property type="match status" value="1"/>
</dbReference>
<dbReference type="FunFam" id="3.40.50.12230:FF:000001">
    <property type="entry name" value="Methionyl-tRNA formyltransferase"/>
    <property type="match status" value="1"/>
</dbReference>
<dbReference type="Gene3D" id="3.10.25.10">
    <property type="entry name" value="Formyl transferase, C-terminal domain"/>
    <property type="match status" value="1"/>
</dbReference>
<dbReference type="Gene3D" id="3.40.50.170">
    <property type="entry name" value="Formyl transferase, N-terminal domain"/>
    <property type="match status" value="1"/>
</dbReference>
<dbReference type="HAMAP" id="MF_00182">
    <property type="entry name" value="Formyl_trans"/>
    <property type="match status" value="1"/>
</dbReference>
<dbReference type="InterPro" id="IPR005794">
    <property type="entry name" value="Fmt"/>
</dbReference>
<dbReference type="InterPro" id="IPR005793">
    <property type="entry name" value="Formyl_trans_C"/>
</dbReference>
<dbReference type="InterPro" id="IPR037022">
    <property type="entry name" value="Formyl_trans_C_sf"/>
</dbReference>
<dbReference type="InterPro" id="IPR002376">
    <property type="entry name" value="Formyl_transf_N"/>
</dbReference>
<dbReference type="InterPro" id="IPR036477">
    <property type="entry name" value="Formyl_transf_N_sf"/>
</dbReference>
<dbReference type="InterPro" id="IPR011034">
    <property type="entry name" value="Formyl_transferase-like_C_sf"/>
</dbReference>
<dbReference type="InterPro" id="IPR001555">
    <property type="entry name" value="GART_AS"/>
</dbReference>
<dbReference type="InterPro" id="IPR044135">
    <property type="entry name" value="Met-tRNA-FMT_C"/>
</dbReference>
<dbReference type="InterPro" id="IPR041711">
    <property type="entry name" value="Met-tRNA-FMT_N"/>
</dbReference>
<dbReference type="NCBIfam" id="TIGR00460">
    <property type="entry name" value="fmt"/>
    <property type="match status" value="1"/>
</dbReference>
<dbReference type="PANTHER" id="PTHR11138">
    <property type="entry name" value="METHIONYL-TRNA FORMYLTRANSFERASE"/>
    <property type="match status" value="1"/>
</dbReference>
<dbReference type="PANTHER" id="PTHR11138:SF5">
    <property type="entry name" value="METHIONYL-TRNA FORMYLTRANSFERASE, MITOCHONDRIAL"/>
    <property type="match status" value="1"/>
</dbReference>
<dbReference type="Pfam" id="PF02911">
    <property type="entry name" value="Formyl_trans_C"/>
    <property type="match status" value="1"/>
</dbReference>
<dbReference type="Pfam" id="PF00551">
    <property type="entry name" value="Formyl_trans_N"/>
    <property type="match status" value="1"/>
</dbReference>
<dbReference type="SUPFAM" id="SSF50486">
    <property type="entry name" value="FMT C-terminal domain-like"/>
    <property type="match status" value="1"/>
</dbReference>
<dbReference type="SUPFAM" id="SSF53328">
    <property type="entry name" value="Formyltransferase"/>
    <property type="match status" value="1"/>
</dbReference>
<dbReference type="PROSITE" id="PS00373">
    <property type="entry name" value="GART"/>
    <property type="match status" value="1"/>
</dbReference>
<proteinExistence type="inferred from homology"/>
<name>FMT_DECAR</name>
<organism>
    <name type="scientific">Dechloromonas aromatica (strain RCB)</name>
    <dbReference type="NCBI Taxonomy" id="159087"/>
    <lineage>
        <taxon>Bacteria</taxon>
        <taxon>Pseudomonadati</taxon>
        <taxon>Pseudomonadota</taxon>
        <taxon>Betaproteobacteria</taxon>
        <taxon>Rhodocyclales</taxon>
        <taxon>Azonexaceae</taxon>
        <taxon>Dechloromonas</taxon>
    </lineage>
</organism>
<evidence type="ECO:0000255" key="1">
    <source>
        <dbReference type="HAMAP-Rule" id="MF_00182"/>
    </source>
</evidence>
<comment type="function">
    <text evidence="1">Attaches a formyl group to the free amino group of methionyl-tRNA(fMet). The formyl group appears to play a dual role in the initiator identity of N-formylmethionyl-tRNA by promoting its recognition by IF2 and preventing the misappropriation of this tRNA by the elongation apparatus.</text>
</comment>
<comment type="catalytic activity">
    <reaction evidence="1">
        <text>L-methionyl-tRNA(fMet) + (6R)-10-formyltetrahydrofolate = N-formyl-L-methionyl-tRNA(fMet) + (6S)-5,6,7,8-tetrahydrofolate + H(+)</text>
        <dbReference type="Rhea" id="RHEA:24380"/>
        <dbReference type="Rhea" id="RHEA-COMP:9952"/>
        <dbReference type="Rhea" id="RHEA-COMP:9953"/>
        <dbReference type="ChEBI" id="CHEBI:15378"/>
        <dbReference type="ChEBI" id="CHEBI:57453"/>
        <dbReference type="ChEBI" id="CHEBI:78530"/>
        <dbReference type="ChEBI" id="CHEBI:78844"/>
        <dbReference type="ChEBI" id="CHEBI:195366"/>
        <dbReference type="EC" id="2.1.2.9"/>
    </reaction>
</comment>
<comment type="similarity">
    <text evidence="1">Belongs to the Fmt family.</text>
</comment>
<sequence>MKLIFAGTPEFAAQALQGIVNAGHEVALVLTQPDRPAGRGMALQPSAVKKVALTHGIEVFQPLTLKDAEAQARIAAVGAEIMVVAAYGLILPQVVLDMPRFGCINIHGSLLPRWRGAAPIQRALLAGDAETGVCIMQMEAGLDTGPVLLRGAFPIAATDTTATLHDRLAELGARLVVEALGKLPLPAEPQPADGVTYAQKIEKAEAMIDWSKSAAELDRHIRAFNPFPGAQALFRGQTVKLWQASPVAGRGETGAILAVDKNSIIIACGEGALAVTELQKAGGKRLPVQQFLAGHPLAVGDRFDIPA</sequence>
<accession>Q47K50</accession>